<accession>Q96ZK5</accession>
<accession>F9VNN2</accession>
<proteinExistence type="inferred from homology"/>
<feature type="chain" id="PRO_0000184593" description="UPF0273 protein STK_18300">
    <location>
        <begin position="1"/>
        <end position="283"/>
    </location>
</feature>
<feature type="domain" description="KaiC" evidence="1">
    <location>
        <begin position="4"/>
        <end position="249"/>
    </location>
</feature>
<feature type="region of interest" description="Disordered" evidence="2">
    <location>
        <begin position="261"/>
        <end position="283"/>
    </location>
</feature>
<feature type="compositionally biased region" description="Acidic residues" evidence="2">
    <location>
        <begin position="267"/>
        <end position="283"/>
    </location>
</feature>
<feature type="binding site" evidence="1">
    <location>
        <begin position="31"/>
        <end position="38"/>
    </location>
    <ligand>
        <name>ATP</name>
        <dbReference type="ChEBI" id="CHEBI:30616"/>
    </ligand>
</feature>
<protein>
    <recommendedName>
        <fullName evidence="1">UPF0273 protein STK_18300</fullName>
    </recommendedName>
</protein>
<keyword id="KW-0067">ATP-binding</keyword>
<keyword id="KW-0547">Nucleotide-binding</keyword>
<keyword id="KW-1185">Reference proteome</keyword>
<name>Y1830_SULTO</name>
<evidence type="ECO:0000255" key="1">
    <source>
        <dbReference type="HAMAP-Rule" id="MF_01076"/>
    </source>
</evidence>
<evidence type="ECO:0000256" key="2">
    <source>
        <dbReference type="SAM" id="MobiDB-lite"/>
    </source>
</evidence>
<gene>
    <name type="ordered locus">STK_18300</name>
</gene>
<sequence>MKVLRVRTYIPGFDEILYGGIPERNIVLISGGPGTGKSILGKQFLYNGLVKKDEPGIFVALEEHPVSVIRSFKHFGWDITKYEKEGKFAIVDAFTAGIGSTAQKEKYVVKDVDNVGELSGVLRDAIRNLNAKRVVIDSVSTLYLSKPAMARSIVMQLKRVIAGLGCTAMFISQVSAGERGFGGPGVEHAVDGIVRLDLDEYEGQLYRSVIVWKMRDSKISMVRHPMDITDEGIVIQWDKYLRITNVKAEIQPLPQKEIEEMKKAVEESEEEKESIQEAEIEEE</sequence>
<comment type="similarity">
    <text evidence="1">Belongs to the UPF0273 family.</text>
</comment>
<dbReference type="EMBL" id="BA000023">
    <property type="protein sequence ID" value="BAK54678.1"/>
    <property type="molecule type" value="Genomic_DNA"/>
</dbReference>
<dbReference type="RefSeq" id="WP_010979897.1">
    <property type="nucleotide sequence ID" value="NC_003106.2"/>
</dbReference>
<dbReference type="SMR" id="Q96ZK5"/>
<dbReference type="STRING" id="273063.STK_18300"/>
<dbReference type="GeneID" id="1459885"/>
<dbReference type="KEGG" id="sto:STK_18300"/>
<dbReference type="PATRIC" id="fig|273063.9.peg.2084"/>
<dbReference type="eggNOG" id="arCOG01171">
    <property type="taxonomic scope" value="Archaea"/>
</dbReference>
<dbReference type="OrthoDB" id="27015at2157"/>
<dbReference type="Proteomes" id="UP000001015">
    <property type="component" value="Chromosome"/>
</dbReference>
<dbReference type="GO" id="GO:0005524">
    <property type="term" value="F:ATP binding"/>
    <property type="evidence" value="ECO:0007669"/>
    <property type="project" value="UniProtKB-UniRule"/>
</dbReference>
<dbReference type="Gene3D" id="3.40.50.300">
    <property type="entry name" value="P-loop containing nucleotide triphosphate hydrolases"/>
    <property type="match status" value="1"/>
</dbReference>
<dbReference type="HAMAP" id="MF_01076">
    <property type="entry name" value="UPF0273"/>
    <property type="match status" value="1"/>
</dbReference>
<dbReference type="InterPro" id="IPR014774">
    <property type="entry name" value="KaiC-like_dom"/>
</dbReference>
<dbReference type="InterPro" id="IPR010624">
    <property type="entry name" value="KaiC_dom"/>
</dbReference>
<dbReference type="InterPro" id="IPR027417">
    <property type="entry name" value="P-loop_NTPase"/>
</dbReference>
<dbReference type="InterPro" id="IPR022475">
    <property type="entry name" value="UPF0273_KaiC-like"/>
</dbReference>
<dbReference type="NCBIfam" id="TIGR03877">
    <property type="entry name" value="thermo_KaiC_1"/>
    <property type="match status" value="1"/>
</dbReference>
<dbReference type="PANTHER" id="PTHR43637">
    <property type="entry name" value="UPF0273 PROTEIN TM_0370"/>
    <property type="match status" value="1"/>
</dbReference>
<dbReference type="PANTHER" id="PTHR43637:SF1">
    <property type="entry name" value="UPF0273 PROTEIN TM_0370"/>
    <property type="match status" value="1"/>
</dbReference>
<dbReference type="Pfam" id="PF06745">
    <property type="entry name" value="ATPase"/>
    <property type="match status" value="1"/>
</dbReference>
<dbReference type="PRINTS" id="PR01874">
    <property type="entry name" value="DNAREPAIRADA"/>
</dbReference>
<dbReference type="SUPFAM" id="SSF52540">
    <property type="entry name" value="P-loop containing nucleoside triphosphate hydrolases"/>
    <property type="match status" value="1"/>
</dbReference>
<dbReference type="PROSITE" id="PS51146">
    <property type="entry name" value="KAIC"/>
    <property type="match status" value="1"/>
</dbReference>
<reference key="1">
    <citation type="journal article" date="2001" name="DNA Res.">
        <title>Complete genome sequence of an aerobic thermoacidophilic Crenarchaeon, Sulfolobus tokodaii strain7.</title>
        <authorList>
            <person name="Kawarabayasi Y."/>
            <person name="Hino Y."/>
            <person name="Horikawa H."/>
            <person name="Jin-no K."/>
            <person name="Takahashi M."/>
            <person name="Sekine M."/>
            <person name="Baba S."/>
            <person name="Ankai A."/>
            <person name="Kosugi H."/>
            <person name="Hosoyama A."/>
            <person name="Fukui S."/>
            <person name="Nagai Y."/>
            <person name="Nishijima K."/>
            <person name="Otsuka R."/>
            <person name="Nakazawa H."/>
            <person name="Takamiya M."/>
            <person name="Kato Y."/>
            <person name="Yoshizawa T."/>
            <person name="Tanaka T."/>
            <person name="Kudoh Y."/>
            <person name="Yamazaki J."/>
            <person name="Kushida N."/>
            <person name="Oguchi A."/>
            <person name="Aoki K."/>
            <person name="Masuda S."/>
            <person name="Yanagii M."/>
            <person name="Nishimura M."/>
            <person name="Yamagishi A."/>
            <person name="Oshima T."/>
            <person name="Kikuchi H."/>
        </authorList>
    </citation>
    <scope>NUCLEOTIDE SEQUENCE [LARGE SCALE GENOMIC DNA]</scope>
    <source>
        <strain>DSM 16993 / JCM 10545 / NBRC 100140 / 7</strain>
    </source>
</reference>
<organism>
    <name type="scientific">Sulfurisphaera tokodaii (strain DSM 16993 / JCM 10545 / NBRC 100140 / 7)</name>
    <name type="common">Sulfolobus tokodaii</name>
    <dbReference type="NCBI Taxonomy" id="273063"/>
    <lineage>
        <taxon>Archaea</taxon>
        <taxon>Thermoproteota</taxon>
        <taxon>Thermoprotei</taxon>
        <taxon>Sulfolobales</taxon>
        <taxon>Sulfolobaceae</taxon>
        <taxon>Sulfurisphaera</taxon>
    </lineage>
</organism>